<keyword id="KW-0012">Acyltransferase</keyword>
<keyword id="KW-0963">Cytoplasm</keyword>
<keyword id="KW-1185">Reference proteome</keyword>
<keyword id="KW-0808">Transferase</keyword>
<comment type="function">
    <text evidence="1">Functions in the N-end rule pathway of protein degradation where it conjugates Leu, Phe and, less efficiently, Met from aminoacyl-tRNAs to the N-termini of proteins containing an N-terminal arginine or lysine.</text>
</comment>
<comment type="catalytic activity">
    <reaction evidence="1">
        <text>N-terminal L-lysyl-[protein] + L-leucyl-tRNA(Leu) = N-terminal L-leucyl-L-lysyl-[protein] + tRNA(Leu) + H(+)</text>
        <dbReference type="Rhea" id="RHEA:12340"/>
        <dbReference type="Rhea" id="RHEA-COMP:9613"/>
        <dbReference type="Rhea" id="RHEA-COMP:9622"/>
        <dbReference type="Rhea" id="RHEA-COMP:12670"/>
        <dbReference type="Rhea" id="RHEA-COMP:12671"/>
        <dbReference type="ChEBI" id="CHEBI:15378"/>
        <dbReference type="ChEBI" id="CHEBI:65249"/>
        <dbReference type="ChEBI" id="CHEBI:78442"/>
        <dbReference type="ChEBI" id="CHEBI:78494"/>
        <dbReference type="ChEBI" id="CHEBI:133043"/>
        <dbReference type="EC" id="2.3.2.6"/>
    </reaction>
</comment>
<comment type="catalytic activity">
    <reaction evidence="1">
        <text>N-terminal L-arginyl-[protein] + L-leucyl-tRNA(Leu) = N-terminal L-leucyl-L-arginyl-[protein] + tRNA(Leu) + H(+)</text>
        <dbReference type="Rhea" id="RHEA:50416"/>
        <dbReference type="Rhea" id="RHEA-COMP:9613"/>
        <dbReference type="Rhea" id="RHEA-COMP:9622"/>
        <dbReference type="Rhea" id="RHEA-COMP:12672"/>
        <dbReference type="Rhea" id="RHEA-COMP:12673"/>
        <dbReference type="ChEBI" id="CHEBI:15378"/>
        <dbReference type="ChEBI" id="CHEBI:64719"/>
        <dbReference type="ChEBI" id="CHEBI:78442"/>
        <dbReference type="ChEBI" id="CHEBI:78494"/>
        <dbReference type="ChEBI" id="CHEBI:133044"/>
        <dbReference type="EC" id="2.3.2.6"/>
    </reaction>
</comment>
<comment type="catalytic activity">
    <reaction evidence="1">
        <text>L-phenylalanyl-tRNA(Phe) + an N-terminal L-alpha-aminoacyl-[protein] = an N-terminal L-phenylalanyl-L-alpha-aminoacyl-[protein] + tRNA(Phe)</text>
        <dbReference type="Rhea" id="RHEA:43632"/>
        <dbReference type="Rhea" id="RHEA-COMP:9668"/>
        <dbReference type="Rhea" id="RHEA-COMP:9699"/>
        <dbReference type="Rhea" id="RHEA-COMP:10636"/>
        <dbReference type="Rhea" id="RHEA-COMP:10637"/>
        <dbReference type="ChEBI" id="CHEBI:78442"/>
        <dbReference type="ChEBI" id="CHEBI:78531"/>
        <dbReference type="ChEBI" id="CHEBI:78597"/>
        <dbReference type="ChEBI" id="CHEBI:83561"/>
        <dbReference type="EC" id="2.3.2.6"/>
    </reaction>
</comment>
<comment type="subcellular location">
    <subcellularLocation>
        <location evidence="1">Cytoplasm</location>
    </subcellularLocation>
</comment>
<comment type="similarity">
    <text evidence="1">Belongs to the L/F-transferase family.</text>
</comment>
<dbReference type="EC" id="2.3.2.6" evidence="1"/>
<dbReference type="EMBL" id="CP000113">
    <property type="protein sequence ID" value="ABF90423.1"/>
    <property type="molecule type" value="Genomic_DNA"/>
</dbReference>
<dbReference type="RefSeq" id="WP_011551428.1">
    <property type="nucleotide sequence ID" value="NC_008095.1"/>
</dbReference>
<dbReference type="SMR" id="Q1DCQ5"/>
<dbReference type="STRING" id="246197.MXAN_1311"/>
<dbReference type="EnsemblBacteria" id="ABF90423">
    <property type="protein sequence ID" value="ABF90423"/>
    <property type="gene ID" value="MXAN_1311"/>
</dbReference>
<dbReference type="GeneID" id="41358758"/>
<dbReference type="KEGG" id="mxa:MXAN_1311"/>
<dbReference type="eggNOG" id="COG2360">
    <property type="taxonomic scope" value="Bacteria"/>
</dbReference>
<dbReference type="HOGENOM" id="CLU_075045_0_0_7"/>
<dbReference type="OrthoDB" id="9790282at2"/>
<dbReference type="Proteomes" id="UP000002402">
    <property type="component" value="Chromosome"/>
</dbReference>
<dbReference type="GO" id="GO:0005737">
    <property type="term" value="C:cytoplasm"/>
    <property type="evidence" value="ECO:0007669"/>
    <property type="project" value="UniProtKB-SubCell"/>
</dbReference>
<dbReference type="GO" id="GO:0008914">
    <property type="term" value="F:leucyl-tRNA--protein transferase activity"/>
    <property type="evidence" value="ECO:0007669"/>
    <property type="project" value="UniProtKB-UniRule"/>
</dbReference>
<dbReference type="GO" id="GO:0030163">
    <property type="term" value="P:protein catabolic process"/>
    <property type="evidence" value="ECO:0007669"/>
    <property type="project" value="UniProtKB-UniRule"/>
</dbReference>
<dbReference type="FunFam" id="3.30.70.3550:FF:000001">
    <property type="entry name" value="Leucyl/phenylalanyl-tRNA--protein transferase"/>
    <property type="match status" value="1"/>
</dbReference>
<dbReference type="FunFam" id="3.40.630.70:FF:000001">
    <property type="entry name" value="Leucyl/phenylalanyl-tRNA--protein transferase"/>
    <property type="match status" value="1"/>
</dbReference>
<dbReference type="Gene3D" id="3.40.630.70">
    <property type="entry name" value="Leucyl/phenylalanyl-tRNA-protein transferase, C-terminal domain"/>
    <property type="match status" value="1"/>
</dbReference>
<dbReference type="Gene3D" id="3.30.70.3550">
    <property type="entry name" value="Leucyl/phenylalanyl-tRNA-protein transferase, N-terminal domain"/>
    <property type="match status" value="1"/>
</dbReference>
<dbReference type="HAMAP" id="MF_00688">
    <property type="entry name" value="Leu_Phe_trans"/>
    <property type="match status" value="1"/>
</dbReference>
<dbReference type="InterPro" id="IPR016181">
    <property type="entry name" value="Acyl_CoA_acyltransferase"/>
</dbReference>
<dbReference type="InterPro" id="IPR004616">
    <property type="entry name" value="Leu/Phe-tRNA_Trfase"/>
</dbReference>
<dbReference type="InterPro" id="IPR042203">
    <property type="entry name" value="Leu/Phe-tRNA_Trfase_C"/>
</dbReference>
<dbReference type="InterPro" id="IPR042221">
    <property type="entry name" value="Leu/Phe-tRNA_Trfase_N"/>
</dbReference>
<dbReference type="NCBIfam" id="TIGR00667">
    <property type="entry name" value="aat"/>
    <property type="match status" value="1"/>
</dbReference>
<dbReference type="PANTHER" id="PTHR30098">
    <property type="entry name" value="LEUCYL/PHENYLALANYL-TRNA--PROTEIN TRANSFERASE"/>
    <property type="match status" value="1"/>
</dbReference>
<dbReference type="PANTHER" id="PTHR30098:SF2">
    <property type="entry name" value="LEUCYL_PHENYLALANYL-TRNA--PROTEIN TRANSFERASE"/>
    <property type="match status" value="1"/>
</dbReference>
<dbReference type="Pfam" id="PF03588">
    <property type="entry name" value="Leu_Phe_trans"/>
    <property type="match status" value="1"/>
</dbReference>
<dbReference type="SUPFAM" id="SSF55729">
    <property type="entry name" value="Acyl-CoA N-acyltransferases (Nat)"/>
    <property type="match status" value="1"/>
</dbReference>
<name>LFTR_MYXXD</name>
<reference key="1">
    <citation type="journal article" date="2006" name="Proc. Natl. Acad. Sci. U.S.A.">
        <title>Evolution of sensory complexity recorded in a myxobacterial genome.</title>
        <authorList>
            <person name="Goldman B.S."/>
            <person name="Nierman W.C."/>
            <person name="Kaiser D."/>
            <person name="Slater S.C."/>
            <person name="Durkin A.S."/>
            <person name="Eisen J.A."/>
            <person name="Ronning C.M."/>
            <person name="Barbazuk W.B."/>
            <person name="Blanchard M."/>
            <person name="Field C."/>
            <person name="Halling C."/>
            <person name="Hinkle G."/>
            <person name="Iartchuk O."/>
            <person name="Kim H.S."/>
            <person name="Mackenzie C."/>
            <person name="Madupu R."/>
            <person name="Miller N."/>
            <person name="Shvartsbeyn A."/>
            <person name="Sullivan S.A."/>
            <person name="Vaudin M."/>
            <person name="Wiegand R."/>
            <person name="Kaplan H.B."/>
        </authorList>
    </citation>
    <scope>NUCLEOTIDE SEQUENCE [LARGE SCALE GENOMIC DNA]</scope>
    <source>
        <strain>DK1622</strain>
    </source>
</reference>
<evidence type="ECO:0000255" key="1">
    <source>
        <dbReference type="HAMAP-Rule" id="MF_00688"/>
    </source>
</evidence>
<gene>
    <name evidence="1" type="primary">aat</name>
    <name type="ordered locus">MXAN_1311</name>
</gene>
<proteinExistence type="inferred from homology"/>
<accession>Q1DCQ5</accession>
<organism>
    <name type="scientific">Myxococcus xanthus (strain DK1622)</name>
    <dbReference type="NCBI Taxonomy" id="246197"/>
    <lineage>
        <taxon>Bacteria</taxon>
        <taxon>Pseudomonadati</taxon>
        <taxon>Myxococcota</taxon>
        <taxon>Myxococcia</taxon>
        <taxon>Myxococcales</taxon>
        <taxon>Cystobacterineae</taxon>
        <taxon>Myxococcaceae</taxon>
        <taxon>Myxococcus</taxon>
    </lineage>
</organism>
<feature type="chain" id="PRO_0000258066" description="Leucyl/phenylalanyl-tRNA--protein transferase">
    <location>
        <begin position="1"/>
        <end position="234"/>
    </location>
</feature>
<sequence length="234" mass="26158">MPIYLLSDEHPELFPPPERADKSGVVAVGGDLRPERLLAAYARGIFPWYSEGDPILWHSPDPRFVLSPDKLHVGRSLRKTMARGIYEVRYDTAFRRVITECSQVPRPGQTGTWITEEMMEAYVTLHEAGFAHSVEAWAEGELKGGLYGVSLGAAFFGESMFALAPDASKVAFVTAAERFQGWGFQLIDCQVETEHLARFGAENWPRRRFLSALARAMKEPTRRGKWTEGAAADP</sequence>
<protein>
    <recommendedName>
        <fullName evidence="1">Leucyl/phenylalanyl-tRNA--protein transferase</fullName>
        <ecNumber evidence="1">2.3.2.6</ecNumber>
    </recommendedName>
    <alternativeName>
        <fullName evidence="1">L/F-transferase</fullName>
    </alternativeName>
    <alternativeName>
        <fullName evidence="1">Leucyltransferase</fullName>
    </alternativeName>
    <alternativeName>
        <fullName evidence="1">Phenyalanyltransferase</fullName>
    </alternativeName>
</protein>